<keyword id="KW-0963">Cytoplasm</keyword>
<keyword id="KW-0489">Methyltransferase</keyword>
<keyword id="KW-0698">rRNA processing</keyword>
<keyword id="KW-0949">S-adenosyl-L-methionine</keyword>
<keyword id="KW-0808">Transferase</keyword>
<organism>
    <name type="scientific">Campylobacter jejuni subsp. jejuni serotype O:6 (strain 81116 / NCTC 11828)</name>
    <dbReference type="NCBI Taxonomy" id="407148"/>
    <lineage>
        <taxon>Bacteria</taxon>
        <taxon>Pseudomonadati</taxon>
        <taxon>Campylobacterota</taxon>
        <taxon>Epsilonproteobacteria</taxon>
        <taxon>Campylobacterales</taxon>
        <taxon>Campylobacteraceae</taxon>
        <taxon>Campylobacter</taxon>
    </lineage>
</organism>
<evidence type="ECO:0000255" key="1">
    <source>
        <dbReference type="HAMAP-Rule" id="MF_00658"/>
    </source>
</evidence>
<feature type="chain" id="PRO_1000072705" description="Ribosomal RNA large subunit methyltransferase H">
    <location>
        <begin position="1"/>
        <end position="149"/>
    </location>
</feature>
<feature type="binding site" evidence="1">
    <location>
        <position position="71"/>
    </location>
    <ligand>
        <name>S-adenosyl-L-methionine</name>
        <dbReference type="ChEBI" id="CHEBI:59789"/>
    </ligand>
</feature>
<feature type="binding site" evidence="1">
    <location>
        <position position="98"/>
    </location>
    <ligand>
        <name>S-adenosyl-L-methionine</name>
        <dbReference type="ChEBI" id="CHEBI:59789"/>
    </ligand>
</feature>
<feature type="binding site" evidence="1">
    <location>
        <begin position="117"/>
        <end position="122"/>
    </location>
    <ligand>
        <name>S-adenosyl-L-methionine</name>
        <dbReference type="ChEBI" id="CHEBI:59789"/>
    </ligand>
</feature>
<name>RLMH_CAMJ8</name>
<proteinExistence type="inferred from homology"/>
<accession>A8FJT1</accession>
<gene>
    <name evidence="1" type="primary">rlmH</name>
    <name type="ordered locus">C8J_0119</name>
</gene>
<comment type="function">
    <text evidence="1">Specifically methylates the pseudouridine at position 1915 (m3Psi1915) in 23S rRNA.</text>
</comment>
<comment type="catalytic activity">
    <reaction evidence="1">
        <text>pseudouridine(1915) in 23S rRNA + S-adenosyl-L-methionine = N(3)-methylpseudouridine(1915) in 23S rRNA + S-adenosyl-L-homocysteine + H(+)</text>
        <dbReference type="Rhea" id="RHEA:42752"/>
        <dbReference type="Rhea" id="RHEA-COMP:10221"/>
        <dbReference type="Rhea" id="RHEA-COMP:10222"/>
        <dbReference type="ChEBI" id="CHEBI:15378"/>
        <dbReference type="ChEBI" id="CHEBI:57856"/>
        <dbReference type="ChEBI" id="CHEBI:59789"/>
        <dbReference type="ChEBI" id="CHEBI:65314"/>
        <dbReference type="ChEBI" id="CHEBI:74486"/>
        <dbReference type="EC" id="2.1.1.177"/>
    </reaction>
</comment>
<comment type="subunit">
    <text evidence="1">Homodimer.</text>
</comment>
<comment type="subcellular location">
    <subcellularLocation>
        <location evidence="1">Cytoplasm</location>
    </subcellularLocation>
</comment>
<comment type="similarity">
    <text evidence="1">Belongs to the RNA methyltransferase RlmH family.</text>
</comment>
<reference key="1">
    <citation type="journal article" date="2007" name="J. Bacteriol.">
        <title>The complete genome sequence of Campylobacter jejuni strain 81116 (NCTC11828).</title>
        <authorList>
            <person name="Pearson B.M."/>
            <person name="Gaskin D.J.H."/>
            <person name="Segers R.P.A.M."/>
            <person name="Wells J.M."/>
            <person name="Nuijten P.J.M."/>
            <person name="van Vliet A.H.M."/>
        </authorList>
    </citation>
    <scope>NUCLEOTIDE SEQUENCE [LARGE SCALE GENOMIC DNA]</scope>
    <source>
        <strain>81116 / NCTC 11828</strain>
    </source>
</reference>
<sequence length="149" mass="17395">MQVNIFCIQKSDEFKTWSEKYSKLISKYATLKEINVFNKKIALAQNLNAIEAKKSYEEAFMPYKKGYCIALDEKGKDLTSIEFAKLIQDKNELSFFIGGAYGLREEFNQSLDFRLSLSKLTLAHQFVKTLLLEQIYRAFCINNNHPYHK</sequence>
<dbReference type="EC" id="2.1.1.177" evidence="1"/>
<dbReference type="EMBL" id="CP000814">
    <property type="protein sequence ID" value="ABV51718.1"/>
    <property type="molecule type" value="Genomic_DNA"/>
</dbReference>
<dbReference type="RefSeq" id="WP_002857335.1">
    <property type="nucleotide sequence ID" value="NC_009839.1"/>
</dbReference>
<dbReference type="SMR" id="A8FJT1"/>
<dbReference type="KEGG" id="cju:C8J_0119"/>
<dbReference type="HOGENOM" id="CLU_100552_2_1_7"/>
<dbReference type="GO" id="GO:0005737">
    <property type="term" value="C:cytoplasm"/>
    <property type="evidence" value="ECO:0007669"/>
    <property type="project" value="UniProtKB-SubCell"/>
</dbReference>
<dbReference type="GO" id="GO:0070038">
    <property type="term" value="F:rRNA (pseudouridine-N3-)-methyltransferase activity"/>
    <property type="evidence" value="ECO:0007669"/>
    <property type="project" value="UniProtKB-UniRule"/>
</dbReference>
<dbReference type="CDD" id="cd18081">
    <property type="entry name" value="RlmH-like"/>
    <property type="match status" value="1"/>
</dbReference>
<dbReference type="Gene3D" id="3.40.1280.10">
    <property type="match status" value="1"/>
</dbReference>
<dbReference type="HAMAP" id="MF_00658">
    <property type="entry name" value="23SrRNA_methyltr_H"/>
    <property type="match status" value="1"/>
</dbReference>
<dbReference type="InterPro" id="IPR029028">
    <property type="entry name" value="Alpha/beta_knot_MTases"/>
</dbReference>
<dbReference type="InterPro" id="IPR003742">
    <property type="entry name" value="RlmH-like"/>
</dbReference>
<dbReference type="InterPro" id="IPR029026">
    <property type="entry name" value="tRNA_m1G_MTases_N"/>
</dbReference>
<dbReference type="PANTHER" id="PTHR33603">
    <property type="entry name" value="METHYLTRANSFERASE"/>
    <property type="match status" value="1"/>
</dbReference>
<dbReference type="PANTHER" id="PTHR33603:SF1">
    <property type="entry name" value="RIBOSOMAL RNA LARGE SUBUNIT METHYLTRANSFERASE H"/>
    <property type="match status" value="1"/>
</dbReference>
<dbReference type="Pfam" id="PF02590">
    <property type="entry name" value="SPOUT_MTase"/>
    <property type="match status" value="1"/>
</dbReference>
<dbReference type="PIRSF" id="PIRSF004505">
    <property type="entry name" value="MT_bac"/>
    <property type="match status" value="1"/>
</dbReference>
<dbReference type="SUPFAM" id="SSF75217">
    <property type="entry name" value="alpha/beta knot"/>
    <property type="match status" value="1"/>
</dbReference>
<protein>
    <recommendedName>
        <fullName evidence="1">Ribosomal RNA large subunit methyltransferase H</fullName>
        <ecNumber evidence="1">2.1.1.177</ecNumber>
    </recommendedName>
    <alternativeName>
        <fullName evidence="1">23S rRNA (pseudouridine1915-N3)-methyltransferase</fullName>
    </alternativeName>
    <alternativeName>
        <fullName evidence="1">23S rRNA m3Psi1915 methyltransferase</fullName>
    </alternativeName>
    <alternativeName>
        <fullName evidence="1">rRNA (pseudouridine-N3-)-methyltransferase RlmH</fullName>
    </alternativeName>
</protein>